<proteinExistence type="predicted"/>
<keyword id="KW-1003">Cell membrane</keyword>
<keyword id="KW-0472">Membrane</keyword>
<keyword id="KW-1185">Reference proteome</keyword>
<keyword id="KW-0812">Transmembrane</keyword>
<keyword id="KW-1133">Transmembrane helix</keyword>
<comment type="subcellular location">
    <subcellularLocation>
        <location evidence="2">Cell membrane</location>
        <topology evidence="2">Multi-pass membrane protein</topology>
    </subcellularLocation>
</comment>
<reference key="1">
    <citation type="journal article" date="1996" name="Science">
        <title>Complete genome sequence of the methanogenic archaeon, Methanococcus jannaschii.</title>
        <authorList>
            <person name="Bult C.J."/>
            <person name="White O."/>
            <person name="Olsen G.J."/>
            <person name="Zhou L."/>
            <person name="Fleischmann R.D."/>
            <person name="Sutton G.G."/>
            <person name="Blake J.A."/>
            <person name="FitzGerald L.M."/>
            <person name="Clayton R.A."/>
            <person name="Gocayne J.D."/>
            <person name="Kerlavage A.R."/>
            <person name="Dougherty B.A."/>
            <person name="Tomb J.-F."/>
            <person name="Adams M.D."/>
            <person name="Reich C.I."/>
            <person name="Overbeek R."/>
            <person name="Kirkness E.F."/>
            <person name="Weinstock K.G."/>
            <person name="Merrick J.M."/>
            <person name="Glodek A."/>
            <person name="Scott J.L."/>
            <person name="Geoghagen N.S.M."/>
            <person name="Weidman J.F."/>
            <person name="Fuhrmann J.L."/>
            <person name="Nguyen D."/>
            <person name="Utterback T.R."/>
            <person name="Kelley J.M."/>
            <person name="Peterson J.D."/>
            <person name="Sadow P.W."/>
            <person name="Hanna M.C."/>
            <person name="Cotton M.D."/>
            <person name="Roberts K.M."/>
            <person name="Hurst M.A."/>
            <person name="Kaine B.P."/>
            <person name="Borodovsky M."/>
            <person name="Klenk H.-P."/>
            <person name="Fraser C.M."/>
            <person name="Smith H.O."/>
            <person name="Woese C.R."/>
            <person name="Venter J.C."/>
        </authorList>
    </citation>
    <scope>NUCLEOTIDE SEQUENCE [LARGE SCALE GENOMIC DNA]</scope>
    <source>
        <strain>ATCC 43067 / DSM 2661 / JAL-1 / JCM 10045 / NBRC 100440</strain>
    </source>
</reference>
<dbReference type="EMBL" id="L77117">
    <property type="protein sequence ID" value="AAB99045.1"/>
    <property type="molecule type" value="Genomic_DNA"/>
</dbReference>
<dbReference type="PIR" id="C64429">
    <property type="entry name" value="C64429"/>
</dbReference>
<dbReference type="SMR" id="Q58442"/>
<dbReference type="STRING" id="243232.MJ_1036"/>
<dbReference type="PaxDb" id="243232-MJ_1036"/>
<dbReference type="EnsemblBacteria" id="AAB99045">
    <property type="protein sequence ID" value="AAB99045"/>
    <property type="gene ID" value="MJ_1036"/>
</dbReference>
<dbReference type="KEGG" id="mja:MJ_1036"/>
<dbReference type="eggNOG" id="arCOG00576">
    <property type="taxonomic scope" value="Archaea"/>
</dbReference>
<dbReference type="HOGENOM" id="CLU_1187785_0_0_2"/>
<dbReference type="InParanoid" id="Q58442"/>
<dbReference type="PhylomeDB" id="Q58442"/>
<dbReference type="Proteomes" id="UP000000805">
    <property type="component" value="Chromosome"/>
</dbReference>
<dbReference type="GO" id="GO:0016020">
    <property type="term" value="C:membrane"/>
    <property type="evidence" value="ECO:0000318"/>
    <property type="project" value="GO_Central"/>
</dbReference>
<dbReference type="GO" id="GO:0005886">
    <property type="term" value="C:plasma membrane"/>
    <property type="evidence" value="ECO:0007669"/>
    <property type="project" value="UniProtKB-SubCell"/>
</dbReference>
<dbReference type="GO" id="GO:0005385">
    <property type="term" value="F:zinc ion transmembrane transporter activity"/>
    <property type="evidence" value="ECO:0000318"/>
    <property type="project" value="GO_Central"/>
</dbReference>
<dbReference type="GO" id="GO:0071577">
    <property type="term" value="P:zinc ion transmembrane transport"/>
    <property type="evidence" value="ECO:0000318"/>
    <property type="project" value="GO_Central"/>
</dbReference>
<dbReference type="InterPro" id="IPR003689">
    <property type="entry name" value="ZIP"/>
</dbReference>
<dbReference type="PANTHER" id="PTHR11040:SF198">
    <property type="entry name" value="METAL HOMEOSTASIS FACTOR ATX2"/>
    <property type="match status" value="1"/>
</dbReference>
<dbReference type="PANTHER" id="PTHR11040">
    <property type="entry name" value="ZINC/IRON TRANSPORTER"/>
    <property type="match status" value="1"/>
</dbReference>
<dbReference type="Pfam" id="PF02535">
    <property type="entry name" value="Zip"/>
    <property type="match status" value="1"/>
</dbReference>
<sequence>MSNMVEVPIFIAILSFIVMCIGELLAYYSVSLKYKYEFEAISFGFIFGVATLILIPKSYSNMFVLYVILGMITVYLIEKYLAYCPLSKKYCVECDNLEENRIKFIYPISFFIHTFIDGLIIAVSYISEIGLPLYLAILMHKLPAGFVLISPLKGVYKNPLYPGVFVSFGTVLGTIVGLVTLKDVSTKILLAFSGGVFLGAFLMLAPHIYEHKEEKTFLYILLGYILVGIIALH</sequence>
<organism>
    <name type="scientific">Methanocaldococcus jannaschii (strain ATCC 43067 / DSM 2661 / JAL-1 / JCM 10045 / NBRC 100440)</name>
    <name type="common">Methanococcus jannaschii</name>
    <dbReference type="NCBI Taxonomy" id="243232"/>
    <lineage>
        <taxon>Archaea</taxon>
        <taxon>Methanobacteriati</taxon>
        <taxon>Methanobacteriota</taxon>
        <taxon>Methanomada group</taxon>
        <taxon>Methanococci</taxon>
        <taxon>Methanococcales</taxon>
        <taxon>Methanocaldococcaceae</taxon>
        <taxon>Methanocaldococcus</taxon>
    </lineage>
</organism>
<feature type="chain" id="PRO_0000107151" description="Uncharacterized protein MJ1036">
    <location>
        <begin position="1"/>
        <end position="233"/>
    </location>
</feature>
<feature type="transmembrane region" description="Helical" evidence="1">
    <location>
        <begin position="7"/>
        <end position="27"/>
    </location>
</feature>
<feature type="transmembrane region" description="Helical" evidence="1">
    <location>
        <begin position="36"/>
        <end position="56"/>
    </location>
</feature>
<feature type="transmembrane region" description="Helical" evidence="1">
    <location>
        <begin position="62"/>
        <end position="82"/>
    </location>
</feature>
<feature type="transmembrane region" description="Helical" evidence="1">
    <location>
        <begin position="119"/>
        <end position="139"/>
    </location>
</feature>
<feature type="transmembrane region" description="Helical" evidence="1">
    <location>
        <begin position="159"/>
        <end position="179"/>
    </location>
</feature>
<feature type="transmembrane region" description="Helical" evidence="1">
    <location>
        <begin position="188"/>
        <end position="208"/>
    </location>
</feature>
<accession>Q58442</accession>
<protein>
    <recommendedName>
        <fullName>Uncharacterized protein MJ1036</fullName>
    </recommendedName>
</protein>
<evidence type="ECO:0000255" key="1"/>
<evidence type="ECO:0000305" key="2"/>
<gene>
    <name type="ordered locus">MJ1036</name>
</gene>
<name>Y1036_METJA</name>